<reference evidence="3 4" key="1">
    <citation type="book" date="1968" name="Chemotaxonomy and serotaxonomy">
        <editorList>
            <person name="Hawkes J.G."/>
        </editorList>
        <authorList>
            <person name="Blombaeck B."/>
            <person name="Blombaeck M."/>
        </authorList>
    </citation>
    <scope>PROTEIN SEQUENCE</scope>
</reference>
<feature type="peptide" id="PRO_0000250591" description="Fibrinopeptide A">
    <location>
        <begin position="1"/>
        <end position="19"/>
    </location>
</feature>
<feature type="non-terminal residue" evidence="3">
    <location>
        <position position="19"/>
    </location>
</feature>
<accession>P84482</accession>
<organism>
    <name type="scientific">Ammotragus lervia</name>
    <name type="common">Barbary sheep</name>
    <name type="synonym">Antilope lervia</name>
    <dbReference type="NCBI Taxonomy" id="9899"/>
    <lineage>
        <taxon>Eukaryota</taxon>
        <taxon>Metazoa</taxon>
        <taxon>Chordata</taxon>
        <taxon>Craniata</taxon>
        <taxon>Vertebrata</taxon>
        <taxon>Euteleostomi</taxon>
        <taxon>Mammalia</taxon>
        <taxon>Eutheria</taxon>
        <taxon>Laurasiatheria</taxon>
        <taxon>Artiodactyla</taxon>
        <taxon>Ruminantia</taxon>
        <taxon>Pecora</taxon>
        <taxon>Bovidae</taxon>
        <taxon>Caprinae</taxon>
        <taxon>Ammotragus</taxon>
    </lineage>
</organism>
<protein>
    <recommendedName>
        <fullName>Fibrinogen alpha chain</fullName>
    </recommendedName>
    <component>
        <recommendedName>
            <fullName>Fibrinopeptide A</fullName>
        </recommendedName>
    </component>
</protein>
<keyword id="KW-1064">Adaptive immunity</keyword>
<keyword id="KW-0094">Blood coagulation</keyword>
<keyword id="KW-0175">Coiled coil</keyword>
<keyword id="KW-0903">Direct protein sequencing</keyword>
<keyword id="KW-1015">Disulfide bond</keyword>
<keyword id="KW-0356">Hemostasis</keyword>
<keyword id="KW-0391">Immunity</keyword>
<keyword id="KW-0399">Innate immunity</keyword>
<keyword id="KW-0964">Secreted</keyword>
<evidence type="ECO:0000250" key="1">
    <source>
        <dbReference type="UniProtKB" id="E9PV24"/>
    </source>
</evidence>
<evidence type="ECO:0000250" key="2">
    <source>
        <dbReference type="UniProtKB" id="P02671"/>
    </source>
</evidence>
<evidence type="ECO:0000305" key="3"/>
<evidence type="ECO:0000312" key="4">
    <source>
        <dbReference type="PIR" id="C29501"/>
    </source>
</evidence>
<dbReference type="PIR" id="C29501">
    <property type="entry name" value="C29501"/>
</dbReference>
<dbReference type="GO" id="GO:0005576">
    <property type="term" value="C:extracellular region"/>
    <property type="evidence" value="ECO:0007669"/>
    <property type="project" value="UniProtKB-SubCell"/>
</dbReference>
<dbReference type="GO" id="GO:0002250">
    <property type="term" value="P:adaptive immune response"/>
    <property type="evidence" value="ECO:0007669"/>
    <property type="project" value="UniProtKB-KW"/>
</dbReference>
<dbReference type="GO" id="GO:0007596">
    <property type="term" value="P:blood coagulation"/>
    <property type="evidence" value="ECO:0007669"/>
    <property type="project" value="UniProtKB-KW"/>
</dbReference>
<dbReference type="GO" id="GO:0045087">
    <property type="term" value="P:innate immune response"/>
    <property type="evidence" value="ECO:0007669"/>
    <property type="project" value="UniProtKB-KW"/>
</dbReference>
<name>FIBA_AMMLE</name>
<gene>
    <name evidence="2" type="primary">FGA</name>
</gene>
<proteinExistence type="evidence at protein level"/>
<sequence length="19" mass="1848">ADDSDPVGGEFLAEGGGVR</sequence>
<comment type="function">
    <text evidence="1">Cleaved by the protease thrombin to yield monomers which, together with fibrinogen beta (FGB) and fibrinogen gamma (FGG), polymerize to form an insoluble fibrin matrix. Fibrin has a major function in hemostasis as one of the primary components of blood clots. In addition, functions during the early stages of wound repair to stabilize the lesion and guide cell migration during re-epithelialization. Was originally thought to be essential for platelet aggregation, based on in vitro studies using anticoagulated blood. However subsequent studies have shown that it is not absolutely required for thrombus formation in vivo. Enhances expression of SELP in activated platelets via an ITGB3-dependent pathway. Maternal fibrinogen is essential for successful pregnancy. Fibrin deposition is also associated with infection, where it protects against IFNG-mediated hemorrhage. May also facilitate the immune response via both innate and T-cell mediated pathways.</text>
</comment>
<comment type="subunit">
    <text evidence="2">Heterohexamer; disulfide linked. Contains 2 sets of 3 non-identical chains (alpha, beta and gamma). The 2 heterotrimers are in head to head conformation with the N-termini in a small central domain (By similarity).</text>
</comment>
<comment type="subcellular location">
    <subcellularLocation>
        <location>Secreted</location>
    </subcellularLocation>
</comment>
<comment type="domain">
    <text evidence="2">A long coiled coil structure formed by 3 polypeptide chains connects the central nodule to the C-terminal domains (distal nodules). The long C-terminal ends of the alpha chains fold back, contributing a fourth strand to the coiled coil structure.</text>
</comment>
<comment type="PTM">
    <text>Conversion of fibrinogen to fibrin is triggered by thrombin, which cleaves fibrinopeptides A and B from alpha and beta chains, and thus exposes the N-terminal polymerization sites responsible for the formation of the soft clot. The soft clot is converted into the hard clot by factor XIIIA which catalyzes the epsilon-(gamma-glutamyl)lysine cross-linking between gamma chains (stronger) and between alpha chains (weaker) of different monomers.</text>
</comment>
<comment type="PTM">
    <text>Forms F13A-mediated cross-links between a glutamine and the epsilon-amino group of a lysine residue, forming fibronectin-fibrinogen heteropolymers.</text>
</comment>